<reference key="1">
    <citation type="journal article" date="2008" name="PLoS ONE">
        <title>Genome sequence of the saprophyte Leptospira biflexa provides insights into the evolution of Leptospira and the pathogenesis of leptospirosis.</title>
        <authorList>
            <person name="Picardeau M."/>
            <person name="Bulach D.M."/>
            <person name="Bouchier C."/>
            <person name="Zuerner R.L."/>
            <person name="Zidane N."/>
            <person name="Wilson P.J."/>
            <person name="Creno S."/>
            <person name="Kuczek E.S."/>
            <person name="Bommezzadri S."/>
            <person name="Davis J.C."/>
            <person name="McGrath A."/>
            <person name="Johnson M.J."/>
            <person name="Boursaux-Eude C."/>
            <person name="Seemann T."/>
            <person name="Rouy Z."/>
            <person name="Coppel R.L."/>
            <person name="Rood J.I."/>
            <person name="Lajus A."/>
            <person name="Davies J.K."/>
            <person name="Medigue C."/>
            <person name="Adler B."/>
        </authorList>
    </citation>
    <scope>NUCLEOTIDE SEQUENCE [LARGE SCALE GENOMIC DNA]</scope>
    <source>
        <strain>Patoc 1 / Ames</strain>
    </source>
</reference>
<proteinExistence type="inferred from homology"/>
<organism>
    <name type="scientific">Leptospira biflexa serovar Patoc (strain Patoc 1 / Ames)</name>
    <dbReference type="NCBI Taxonomy" id="355278"/>
    <lineage>
        <taxon>Bacteria</taxon>
        <taxon>Pseudomonadati</taxon>
        <taxon>Spirochaetota</taxon>
        <taxon>Spirochaetia</taxon>
        <taxon>Leptospirales</taxon>
        <taxon>Leptospiraceae</taxon>
        <taxon>Leptospira</taxon>
    </lineage>
</organism>
<dbReference type="EC" id="6.1.1.15" evidence="1"/>
<dbReference type="EMBL" id="CP000777">
    <property type="protein sequence ID" value="ABZ95013.1"/>
    <property type="molecule type" value="Genomic_DNA"/>
</dbReference>
<dbReference type="RefSeq" id="WP_012389548.1">
    <property type="nucleotide sequence ID" value="NC_010842.1"/>
</dbReference>
<dbReference type="SMR" id="B0SDM9"/>
<dbReference type="KEGG" id="lbf:LBF_2529"/>
<dbReference type="HOGENOM" id="CLU_016739_0_0_12"/>
<dbReference type="GO" id="GO:0005829">
    <property type="term" value="C:cytosol"/>
    <property type="evidence" value="ECO:0007669"/>
    <property type="project" value="TreeGrafter"/>
</dbReference>
<dbReference type="GO" id="GO:0002161">
    <property type="term" value="F:aminoacyl-tRNA deacylase activity"/>
    <property type="evidence" value="ECO:0007669"/>
    <property type="project" value="InterPro"/>
</dbReference>
<dbReference type="GO" id="GO:0005524">
    <property type="term" value="F:ATP binding"/>
    <property type="evidence" value="ECO:0007669"/>
    <property type="project" value="UniProtKB-UniRule"/>
</dbReference>
<dbReference type="GO" id="GO:0004827">
    <property type="term" value="F:proline-tRNA ligase activity"/>
    <property type="evidence" value="ECO:0007669"/>
    <property type="project" value="UniProtKB-UniRule"/>
</dbReference>
<dbReference type="GO" id="GO:0006433">
    <property type="term" value="P:prolyl-tRNA aminoacylation"/>
    <property type="evidence" value="ECO:0007669"/>
    <property type="project" value="UniProtKB-UniRule"/>
</dbReference>
<dbReference type="CDD" id="cd00861">
    <property type="entry name" value="ProRS_anticodon_short"/>
    <property type="match status" value="1"/>
</dbReference>
<dbReference type="CDD" id="cd00779">
    <property type="entry name" value="ProRS_core_prok"/>
    <property type="match status" value="1"/>
</dbReference>
<dbReference type="FunFam" id="3.30.930.10:FF:000042">
    <property type="entry name" value="probable proline--tRNA ligase, mitochondrial"/>
    <property type="match status" value="1"/>
</dbReference>
<dbReference type="Gene3D" id="3.40.50.800">
    <property type="entry name" value="Anticodon-binding domain"/>
    <property type="match status" value="1"/>
</dbReference>
<dbReference type="Gene3D" id="3.30.930.10">
    <property type="entry name" value="Bira Bifunctional Protein, Domain 2"/>
    <property type="match status" value="2"/>
</dbReference>
<dbReference type="HAMAP" id="MF_01569">
    <property type="entry name" value="Pro_tRNA_synth_type1"/>
    <property type="match status" value="1"/>
</dbReference>
<dbReference type="InterPro" id="IPR002314">
    <property type="entry name" value="aa-tRNA-synt_IIb"/>
</dbReference>
<dbReference type="InterPro" id="IPR006195">
    <property type="entry name" value="aa-tRNA-synth_II"/>
</dbReference>
<dbReference type="InterPro" id="IPR045864">
    <property type="entry name" value="aa-tRNA-synth_II/BPL/LPL"/>
</dbReference>
<dbReference type="InterPro" id="IPR004154">
    <property type="entry name" value="Anticodon-bd"/>
</dbReference>
<dbReference type="InterPro" id="IPR036621">
    <property type="entry name" value="Anticodon-bd_dom_sf"/>
</dbReference>
<dbReference type="InterPro" id="IPR002316">
    <property type="entry name" value="Pro-tRNA-ligase_IIa"/>
</dbReference>
<dbReference type="InterPro" id="IPR004500">
    <property type="entry name" value="Pro-tRNA-synth_IIa_bac-type"/>
</dbReference>
<dbReference type="InterPro" id="IPR023717">
    <property type="entry name" value="Pro-tRNA-Synthase_IIa_type1"/>
</dbReference>
<dbReference type="InterPro" id="IPR050062">
    <property type="entry name" value="Pro-tRNA_synthetase"/>
</dbReference>
<dbReference type="InterPro" id="IPR044140">
    <property type="entry name" value="ProRS_anticodon_short"/>
</dbReference>
<dbReference type="InterPro" id="IPR033730">
    <property type="entry name" value="ProRS_core_prok"/>
</dbReference>
<dbReference type="InterPro" id="IPR036754">
    <property type="entry name" value="YbaK/aa-tRNA-synt-asso_dom_sf"/>
</dbReference>
<dbReference type="InterPro" id="IPR007214">
    <property type="entry name" value="YbaK/aa-tRNA-synth-assoc-dom"/>
</dbReference>
<dbReference type="NCBIfam" id="NF006625">
    <property type="entry name" value="PRK09194.1"/>
    <property type="match status" value="1"/>
</dbReference>
<dbReference type="NCBIfam" id="TIGR00409">
    <property type="entry name" value="proS_fam_II"/>
    <property type="match status" value="1"/>
</dbReference>
<dbReference type="PANTHER" id="PTHR42753">
    <property type="entry name" value="MITOCHONDRIAL RIBOSOME PROTEIN L39/PROLYL-TRNA LIGASE FAMILY MEMBER"/>
    <property type="match status" value="1"/>
</dbReference>
<dbReference type="PANTHER" id="PTHR42753:SF2">
    <property type="entry name" value="PROLINE--TRNA LIGASE"/>
    <property type="match status" value="1"/>
</dbReference>
<dbReference type="Pfam" id="PF03129">
    <property type="entry name" value="HGTP_anticodon"/>
    <property type="match status" value="1"/>
</dbReference>
<dbReference type="Pfam" id="PF00587">
    <property type="entry name" value="tRNA-synt_2b"/>
    <property type="match status" value="1"/>
</dbReference>
<dbReference type="Pfam" id="PF04073">
    <property type="entry name" value="tRNA_edit"/>
    <property type="match status" value="1"/>
</dbReference>
<dbReference type="PRINTS" id="PR01046">
    <property type="entry name" value="TRNASYNTHPRO"/>
</dbReference>
<dbReference type="SUPFAM" id="SSF52954">
    <property type="entry name" value="Class II aaRS ABD-related"/>
    <property type="match status" value="1"/>
</dbReference>
<dbReference type="SUPFAM" id="SSF55681">
    <property type="entry name" value="Class II aaRS and biotin synthetases"/>
    <property type="match status" value="1"/>
</dbReference>
<dbReference type="SUPFAM" id="SSF55826">
    <property type="entry name" value="YbaK/ProRS associated domain"/>
    <property type="match status" value="1"/>
</dbReference>
<dbReference type="PROSITE" id="PS50862">
    <property type="entry name" value="AA_TRNA_LIGASE_II"/>
    <property type="match status" value="1"/>
</dbReference>
<keyword id="KW-0030">Aminoacyl-tRNA synthetase</keyword>
<keyword id="KW-0067">ATP-binding</keyword>
<keyword id="KW-0963">Cytoplasm</keyword>
<keyword id="KW-0436">Ligase</keyword>
<keyword id="KW-0547">Nucleotide-binding</keyword>
<keyword id="KW-0648">Protein biosynthesis</keyword>
<sequence length="586" mass="65331">MKASSYLIPTAKEDPQDAVVASHKLMMRAGLIRKSAAGLYSYLPLGLRVLRKIEGIVRKEMDKAGGLEFQLPILTPSEIWKESGRWDKMGKEMFRLKDRHDNESCLGPTHEESFCVLVKPMVRSYKDLPINVYQIHTKFRDEIRPRFGVIRSREFTMKDAYSFHLDDESLDKTYQTMRKTYRRIFAGMGLTTIPVQADSGNMGGSASEEFMVVSPIGEETLTICPSCHYSGNIEKTPVIVNRNATKQVFDGKGKLHTPAKKSITEVAEFLNTKEENLLKAVAVVADGQYILVFLEGDRELNENKLKNHLGCNELRPMGPAEMEKLGLVPGFIGPGFPKSESLKIYIDALLDWNFSYIAGGNEIDHHIAGVQLTSIFKEEEVTKIDISQAKVGDPCPSCGTGLTAEKGIEVGHIFKLGQKYSKAFDITVLNDKGKATTTTMGCYGIGVNRCMATVIEQCNDEKGIFWPVSIAPFTVCLVSIAKNPDDIAKIETIYKSLVESGIEVLWDDRDLGPGFKFKDSELIGFPIRITLGKGFLEKNEITILDRKSMAEDTLVYTTNEELVTHLKLKISQLEETIEKEVSLAGT</sequence>
<gene>
    <name evidence="1" type="primary">proS</name>
    <name type="ordered locus">LBF_2529</name>
</gene>
<protein>
    <recommendedName>
        <fullName evidence="1">Proline--tRNA ligase</fullName>
        <ecNumber evidence="1">6.1.1.15</ecNumber>
    </recommendedName>
    <alternativeName>
        <fullName evidence="1">Prolyl-tRNA synthetase</fullName>
        <shortName evidence="1">ProRS</shortName>
    </alternativeName>
</protein>
<comment type="function">
    <text evidence="1">Catalyzes the attachment of proline to tRNA(Pro) in a two-step reaction: proline is first activated by ATP to form Pro-AMP and then transferred to the acceptor end of tRNA(Pro). As ProRS can inadvertently accommodate and process non-cognate amino acids such as alanine and cysteine, to avoid such errors it has two additional distinct editing activities against alanine. One activity is designated as 'pretransfer' editing and involves the tRNA(Pro)-independent hydrolysis of activated Ala-AMP. The other activity is designated 'posttransfer' editing and involves deacylation of mischarged Ala-tRNA(Pro). The misacylated Cys-tRNA(Pro) is not edited by ProRS.</text>
</comment>
<comment type="catalytic activity">
    <reaction evidence="1">
        <text>tRNA(Pro) + L-proline + ATP = L-prolyl-tRNA(Pro) + AMP + diphosphate</text>
        <dbReference type="Rhea" id="RHEA:14305"/>
        <dbReference type="Rhea" id="RHEA-COMP:9700"/>
        <dbReference type="Rhea" id="RHEA-COMP:9702"/>
        <dbReference type="ChEBI" id="CHEBI:30616"/>
        <dbReference type="ChEBI" id="CHEBI:33019"/>
        <dbReference type="ChEBI" id="CHEBI:60039"/>
        <dbReference type="ChEBI" id="CHEBI:78442"/>
        <dbReference type="ChEBI" id="CHEBI:78532"/>
        <dbReference type="ChEBI" id="CHEBI:456215"/>
        <dbReference type="EC" id="6.1.1.15"/>
    </reaction>
</comment>
<comment type="subunit">
    <text evidence="1">Homodimer.</text>
</comment>
<comment type="subcellular location">
    <subcellularLocation>
        <location evidence="1">Cytoplasm</location>
    </subcellularLocation>
</comment>
<comment type="domain">
    <text evidence="1">Consists of three domains: the N-terminal catalytic domain, the editing domain and the C-terminal anticodon-binding domain.</text>
</comment>
<comment type="similarity">
    <text evidence="1">Belongs to the class-II aminoacyl-tRNA synthetase family. ProS type 1 subfamily.</text>
</comment>
<feature type="chain" id="PRO_1000199401" description="Proline--tRNA ligase">
    <location>
        <begin position="1"/>
        <end position="586"/>
    </location>
</feature>
<name>SYP_LEPBA</name>
<accession>B0SDM9</accession>
<evidence type="ECO:0000255" key="1">
    <source>
        <dbReference type="HAMAP-Rule" id="MF_01569"/>
    </source>
</evidence>